<name>ASB5_RABIT</name>
<feature type="chain" id="PRO_0000066932" description="Ankyrin repeat and SOCS box protein 5">
    <location>
        <begin position="1"/>
        <end position="329"/>
    </location>
</feature>
<feature type="repeat" description="ANK 1">
    <location>
        <begin position="69"/>
        <end position="98"/>
    </location>
</feature>
<feature type="repeat" description="ANK 2">
    <location>
        <begin position="102"/>
        <end position="131"/>
    </location>
</feature>
<feature type="repeat" description="ANK 3">
    <location>
        <begin position="135"/>
        <end position="164"/>
    </location>
</feature>
<feature type="repeat" description="ANK 4">
    <location>
        <begin position="167"/>
        <end position="196"/>
    </location>
</feature>
<feature type="repeat" description="ANK 5">
    <location>
        <begin position="200"/>
        <end position="229"/>
    </location>
</feature>
<feature type="repeat" description="ANK 6">
    <location>
        <begin position="232"/>
        <end position="261"/>
    </location>
</feature>
<feature type="domain" description="SOCS box" evidence="2">
    <location>
        <begin position="278"/>
        <end position="329"/>
    </location>
</feature>
<accession>Q862Z2</accession>
<comment type="function">
    <text evidence="1 3">May be a substrate-recognition component of a SCF-like ECS (Elongin-Cullin-SOCS-box protein) E3 ubiquitin-protein ligase complex which mediates the ubiquitination and subsequent proteasomal degradation of target proteins (By similarity). May play a role in the initiation of arteriogenesis.</text>
</comment>
<comment type="pathway">
    <text>Protein modification; protein ubiquitination.</text>
</comment>
<comment type="tissue specificity">
    <text evidence="3">Expressed in endothelial and smooth muscle cells of collateral arteries as well as in satellite cells.</text>
</comment>
<comment type="induction">
    <text evidence="3">Up-regulated in growing collateral arteries.</text>
</comment>
<comment type="domain">
    <text evidence="1">The SOCS box domain mediates the interaction with the Elongin BC complex, an adapter module in different E3 ubiquitin-protein ligase complexes.</text>
</comment>
<comment type="similarity">
    <text evidence="4">Belongs to the ankyrin SOCS box (ASB) family.</text>
</comment>
<sequence>MSVLEESRPFAQQLFNVYFTILSLFCFKLFVKISLAILSHFYIVKGNRKEAARIAAEFYGVTQGQGSWADRSPLHEAASQGRLLALRTLLSQGYNVNAVTIDHITPLHEACLGDHVACARTLLEAGANVNAITIDGVTPLFNACSQGSTSCTELLLEYGAKAQLESCLPSPTHEAASKGHHEFLDLLISWGIDVDQDIPHLGTPLYVACMSQQFHCIWKLLYAGADVQKGKYWDTPLHAAAQQSSTEIVNLLIEFGADINAKNTELLRPVDVATTSSMVERILLQHEATPSSLCQLCRLCIRNYIGRPRLHLIPQLQLPTLLQNFLQYR</sequence>
<dbReference type="EMBL" id="AY165034">
    <property type="protein sequence ID" value="AAO39148.1"/>
    <property type="molecule type" value="mRNA"/>
</dbReference>
<dbReference type="RefSeq" id="NP_001156539.1">
    <property type="nucleotide sequence ID" value="NM_001163067.1"/>
</dbReference>
<dbReference type="SMR" id="Q862Z2"/>
<dbReference type="FunCoup" id="Q862Z2">
    <property type="interactions" value="9"/>
</dbReference>
<dbReference type="STRING" id="9986.ENSOCUP00000010841"/>
<dbReference type="PaxDb" id="9986-ENSOCUP00000010841"/>
<dbReference type="GeneID" id="100302410"/>
<dbReference type="KEGG" id="ocu:100302410"/>
<dbReference type="CTD" id="140458"/>
<dbReference type="eggNOG" id="KOG0504">
    <property type="taxonomic scope" value="Eukaryota"/>
</dbReference>
<dbReference type="InParanoid" id="Q862Z2"/>
<dbReference type="OrthoDB" id="3246549at2759"/>
<dbReference type="UniPathway" id="UPA00143"/>
<dbReference type="Proteomes" id="UP000001811">
    <property type="component" value="Unplaced"/>
</dbReference>
<dbReference type="GO" id="GO:0035556">
    <property type="term" value="P:intracellular signal transduction"/>
    <property type="evidence" value="ECO:0007669"/>
    <property type="project" value="InterPro"/>
</dbReference>
<dbReference type="GO" id="GO:0045732">
    <property type="term" value="P:positive regulation of protein catabolic process"/>
    <property type="evidence" value="ECO:0007669"/>
    <property type="project" value="TreeGrafter"/>
</dbReference>
<dbReference type="GO" id="GO:0016567">
    <property type="term" value="P:protein ubiquitination"/>
    <property type="evidence" value="ECO:0007669"/>
    <property type="project" value="UniProtKB-UniPathway"/>
</dbReference>
<dbReference type="CDD" id="cd03724">
    <property type="entry name" value="SOCS_ASB5"/>
    <property type="match status" value="1"/>
</dbReference>
<dbReference type="FunFam" id="1.10.750.20:FF:000001">
    <property type="entry name" value="Ankyrin repeat and SOCS box containing 1"/>
    <property type="match status" value="1"/>
</dbReference>
<dbReference type="FunFam" id="1.25.40.20:FF:000016">
    <property type="entry name" value="Ankyrin repeat and SOCS box containing 5"/>
    <property type="match status" value="1"/>
</dbReference>
<dbReference type="Gene3D" id="1.25.40.20">
    <property type="entry name" value="Ankyrin repeat-containing domain"/>
    <property type="match status" value="1"/>
</dbReference>
<dbReference type="Gene3D" id="1.10.750.20">
    <property type="entry name" value="SOCS box"/>
    <property type="match status" value="1"/>
</dbReference>
<dbReference type="InterPro" id="IPR051573">
    <property type="entry name" value="Ankyrin-SOCS_box_domain"/>
</dbReference>
<dbReference type="InterPro" id="IPR002110">
    <property type="entry name" value="Ankyrin_rpt"/>
</dbReference>
<dbReference type="InterPro" id="IPR036770">
    <property type="entry name" value="Ankyrin_rpt-contain_sf"/>
</dbReference>
<dbReference type="InterPro" id="IPR037328">
    <property type="entry name" value="ASB5_SOCS"/>
</dbReference>
<dbReference type="InterPro" id="IPR001496">
    <property type="entry name" value="SOCS_box"/>
</dbReference>
<dbReference type="InterPro" id="IPR036036">
    <property type="entry name" value="SOCS_box-like_dom_sf"/>
</dbReference>
<dbReference type="PANTHER" id="PTHR24136:SF18">
    <property type="entry name" value="ANKYRIN REPEAT AND SOCS BOX PROTEIN 5"/>
    <property type="match status" value="1"/>
</dbReference>
<dbReference type="PANTHER" id="PTHR24136">
    <property type="entry name" value="SOWAH (DROSOPHILA) HOMOLOG"/>
    <property type="match status" value="1"/>
</dbReference>
<dbReference type="Pfam" id="PF12796">
    <property type="entry name" value="Ank_2"/>
    <property type="match status" value="2"/>
</dbReference>
<dbReference type="Pfam" id="PF07525">
    <property type="entry name" value="SOCS_box"/>
    <property type="match status" value="1"/>
</dbReference>
<dbReference type="PRINTS" id="PR01415">
    <property type="entry name" value="ANKYRIN"/>
</dbReference>
<dbReference type="SMART" id="SM00248">
    <property type="entry name" value="ANK"/>
    <property type="match status" value="6"/>
</dbReference>
<dbReference type="SMART" id="SM00969">
    <property type="entry name" value="SOCS_box"/>
    <property type="match status" value="1"/>
</dbReference>
<dbReference type="SUPFAM" id="SSF48403">
    <property type="entry name" value="Ankyrin repeat"/>
    <property type="match status" value="1"/>
</dbReference>
<dbReference type="SUPFAM" id="SSF158235">
    <property type="entry name" value="SOCS box-like"/>
    <property type="match status" value="1"/>
</dbReference>
<dbReference type="PROSITE" id="PS50297">
    <property type="entry name" value="ANK_REP_REGION"/>
    <property type="match status" value="1"/>
</dbReference>
<dbReference type="PROSITE" id="PS50088">
    <property type="entry name" value="ANK_REPEAT"/>
    <property type="match status" value="4"/>
</dbReference>
<dbReference type="PROSITE" id="PS50225">
    <property type="entry name" value="SOCS"/>
    <property type="match status" value="1"/>
</dbReference>
<organism>
    <name type="scientific">Oryctolagus cuniculus</name>
    <name type="common">Rabbit</name>
    <dbReference type="NCBI Taxonomy" id="9986"/>
    <lineage>
        <taxon>Eukaryota</taxon>
        <taxon>Metazoa</taxon>
        <taxon>Chordata</taxon>
        <taxon>Craniata</taxon>
        <taxon>Vertebrata</taxon>
        <taxon>Euteleostomi</taxon>
        <taxon>Mammalia</taxon>
        <taxon>Eutheria</taxon>
        <taxon>Euarchontoglires</taxon>
        <taxon>Glires</taxon>
        <taxon>Lagomorpha</taxon>
        <taxon>Leporidae</taxon>
        <taxon>Oryctolagus</taxon>
    </lineage>
</organism>
<evidence type="ECO:0000250" key="1"/>
<evidence type="ECO:0000255" key="2">
    <source>
        <dbReference type="PROSITE-ProRule" id="PRU00194"/>
    </source>
</evidence>
<evidence type="ECO:0000269" key="3">
    <source>
    </source>
</evidence>
<evidence type="ECO:0000305" key="4"/>
<keyword id="KW-0040">ANK repeat</keyword>
<keyword id="KW-1185">Reference proteome</keyword>
<keyword id="KW-0677">Repeat</keyword>
<keyword id="KW-0833">Ubl conjugation pathway</keyword>
<reference key="1">
    <citation type="journal article" date="2003" name="Biochem. Biophys. Res. Commun.">
        <title>The ankyrin repeat containing SOCS box protein 5: a novel protein associated with arteriogenesis.</title>
        <authorList>
            <person name="Boengler K."/>
            <person name="Pipp F."/>
            <person name="Fernandez B."/>
            <person name="Richter A."/>
            <person name="Schaper W."/>
            <person name="Deindl E."/>
        </authorList>
    </citation>
    <scope>NUCLEOTIDE SEQUENCE [MRNA]</scope>
    <scope>FUNCTION</scope>
    <scope>INDUCTION</scope>
    <scope>TISSUE SPECIFICITY</scope>
</reference>
<protein>
    <recommendedName>
        <fullName>Ankyrin repeat and SOCS box protein 5</fullName>
        <shortName>ASB-5</shortName>
    </recommendedName>
</protein>
<gene>
    <name type="primary">ASB5</name>
</gene>
<proteinExistence type="evidence at transcript level"/>